<organism>
    <name type="scientific">Aeromonas salmonicida (strain A449)</name>
    <dbReference type="NCBI Taxonomy" id="382245"/>
    <lineage>
        <taxon>Bacteria</taxon>
        <taxon>Pseudomonadati</taxon>
        <taxon>Pseudomonadota</taxon>
        <taxon>Gammaproteobacteria</taxon>
        <taxon>Aeromonadales</taxon>
        <taxon>Aeromonadaceae</taxon>
        <taxon>Aeromonas</taxon>
    </lineage>
</organism>
<reference key="1">
    <citation type="journal article" date="2008" name="BMC Genomics">
        <title>The genome of Aeromonas salmonicida subsp. salmonicida A449: insights into the evolution of a fish pathogen.</title>
        <authorList>
            <person name="Reith M.E."/>
            <person name="Singh R.K."/>
            <person name="Curtis B."/>
            <person name="Boyd J.M."/>
            <person name="Bouevitch A."/>
            <person name="Kimball J."/>
            <person name="Munholland J."/>
            <person name="Murphy C."/>
            <person name="Sarty D."/>
            <person name="Williams J."/>
            <person name="Nash J.H."/>
            <person name="Johnson S.C."/>
            <person name="Brown L.L."/>
        </authorList>
    </citation>
    <scope>NUCLEOTIDE SEQUENCE [LARGE SCALE GENOMIC DNA]</scope>
    <source>
        <strain>A449</strain>
    </source>
</reference>
<keyword id="KW-0001">2Fe-2S</keyword>
<keyword id="KW-0963">Cytoplasm</keyword>
<keyword id="KW-0408">Iron</keyword>
<keyword id="KW-0411">Iron-sulfur</keyword>
<keyword id="KW-0479">Metal-binding</keyword>
<keyword id="KW-0663">Pyridoxal phosphate</keyword>
<keyword id="KW-0808">Transferase</keyword>
<dbReference type="EC" id="2.8.1.7" evidence="1"/>
<dbReference type="EMBL" id="CP000644">
    <property type="protein sequence ID" value="ABO90636.1"/>
    <property type="molecule type" value="Genomic_DNA"/>
</dbReference>
<dbReference type="RefSeq" id="WP_005310403.1">
    <property type="nucleotide sequence ID" value="NC_009348.1"/>
</dbReference>
<dbReference type="SMR" id="A4SP14"/>
<dbReference type="STRING" id="29491.GCA_000820065_00270"/>
<dbReference type="KEGG" id="asa:ASA_2612"/>
<dbReference type="eggNOG" id="COG1104">
    <property type="taxonomic scope" value="Bacteria"/>
</dbReference>
<dbReference type="HOGENOM" id="CLU_003433_0_2_6"/>
<dbReference type="UniPathway" id="UPA00266"/>
<dbReference type="Proteomes" id="UP000000225">
    <property type="component" value="Chromosome"/>
</dbReference>
<dbReference type="GO" id="GO:1990221">
    <property type="term" value="C:L-cysteine desulfurase complex"/>
    <property type="evidence" value="ECO:0007669"/>
    <property type="project" value="UniProtKB-ARBA"/>
</dbReference>
<dbReference type="GO" id="GO:0051537">
    <property type="term" value="F:2 iron, 2 sulfur cluster binding"/>
    <property type="evidence" value="ECO:0007669"/>
    <property type="project" value="UniProtKB-UniRule"/>
</dbReference>
<dbReference type="GO" id="GO:0031071">
    <property type="term" value="F:cysteine desulfurase activity"/>
    <property type="evidence" value="ECO:0007669"/>
    <property type="project" value="UniProtKB-UniRule"/>
</dbReference>
<dbReference type="GO" id="GO:0046872">
    <property type="term" value="F:metal ion binding"/>
    <property type="evidence" value="ECO:0007669"/>
    <property type="project" value="UniProtKB-KW"/>
</dbReference>
<dbReference type="GO" id="GO:0030170">
    <property type="term" value="F:pyridoxal phosphate binding"/>
    <property type="evidence" value="ECO:0007669"/>
    <property type="project" value="UniProtKB-UniRule"/>
</dbReference>
<dbReference type="GO" id="GO:0044571">
    <property type="term" value="P:[2Fe-2S] cluster assembly"/>
    <property type="evidence" value="ECO:0007669"/>
    <property type="project" value="UniProtKB-UniRule"/>
</dbReference>
<dbReference type="FunFam" id="3.40.640.10:FF:000003">
    <property type="entry name" value="Cysteine desulfurase IscS"/>
    <property type="match status" value="1"/>
</dbReference>
<dbReference type="FunFam" id="3.90.1150.10:FF:000002">
    <property type="entry name" value="Cysteine desulfurase IscS"/>
    <property type="match status" value="1"/>
</dbReference>
<dbReference type="Gene3D" id="3.90.1150.10">
    <property type="entry name" value="Aspartate Aminotransferase, domain 1"/>
    <property type="match status" value="1"/>
</dbReference>
<dbReference type="Gene3D" id="3.40.640.10">
    <property type="entry name" value="Type I PLP-dependent aspartate aminotransferase-like (Major domain)"/>
    <property type="match status" value="1"/>
</dbReference>
<dbReference type="HAMAP" id="MF_00331">
    <property type="entry name" value="Cys_desulf_IscS"/>
    <property type="match status" value="1"/>
</dbReference>
<dbReference type="InterPro" id="IPR000192">
    <property type="entry name" value="Aminotrans_V_dom"/>
</dbReference>
<dbReference type="InterPro" id="IPR020578">
    <property type="entry name" value="Aminotrans_V_PyrdxlP_BS"/>
</dbReference>
<dbReference type="InterPro" id="IPR010240">
    <property type="entry name" value="Cys_deSase_IscS"/>
</dbReference>
<dbReference type="InterPro" id="IPR016454">
    <property type="entry name" value="Cysteine_dSase"/>
</dbReference>
<dbReference type="InterPro" id="IPR015424">
    <property type="entry name" value="PyrdxlP-dep_Trfase"/>
</dbReference>
<dbReference type="InterPro" id="IPR015421">
    <property type="entry name" value="PyrdxlP-dep_Trfase_major"/>
</dbReference>
<dbReference type="InterPro" id="IPR015422">
    <property type="entry name" value="PyrdxlP-dep_Trfase_small"/>
</dbReference>
<dbReference type="NCBIfam" id="TIGR02006">
    <property type="entry name" value="IscS"/>
    <property type="match status" value="1"/>
</dbReference>
<dbReference type="NCBIfam" id="NF010611">
    <property type="entry name" value="PRK14012.1"/>
    <property type="match status" value="1"/>
</dbReference>
<dbReference type="PANTHER" id="PTHR11601:SF34">
    <property type="entry name" value="CYSTEINE DESULFURASE"/>
    <property type="match status" value="1"/>
</dbReference>
<dbReference type="PANTHER" id="PTHR11601">
    <property type="entry name" value="CYSTEINE DESULFURYLASE FAMILY MEMBER"/>
    <property type="match status" value="1"/>
</dbReference>
<dbReference type="Pfam" id="PF00266">
    <property type="entry name" value="Aminotran_5"/>
    <property type="match status" value="1"/>
</dbReference>
<dbReference type="PIRSF" id="PIRSF005572">
    <property type="entry name" value="NifS"/>
    <property type="match status" value="1"/>
</dbReference>
<dbReference type="SUPFAM" id="SSF53383">
    <property type="entry name" value="PLP-dependent transferases"/>
    <property type="match status" value="1"/>
</dbReference>
<dbReference type="PROSITE" id="PS00595">
    <property type="entry name" value="AA_TRANSFER_CLASS_5"/>
    <property type="match status" value="1"/>
</dbReference>
<sequence>MKLPIYLDYSATCPVDPRVAEKMMQCLTMDGLFGNPASRSHRFGWQAEEAVDLARNQVAELLGADPREIVFTSGATESNNLAIKGVAHFYAGKGKHIITSKTEHKAVLDTCRQLEREGYEVTYLEPMPNGLFTLEQIEGALRDDTILVSIMHVNNEIGVVQNIAAIGELCRSRKILLHVDAVQSVGKIPVDVEALKVDLLSVSAHKVYGPKGIGALFVRRKPRVRLEAQMHGGGHERGMRSGTLPTHQIVGMGEAFRIAKEEMASEGQHIMALRQRLWDGIKDIEAVYINGDLEQRVPGNLNVSFAYVEGESLIMALKDLAVSSGSACTSASLEPSYVLRALGLNDELAHSSIRFSLGRFTTEEEIDYAIKLIRDSIGRLREMSPLWEMYKDGVDLNTVEWAHH</sequence>
<gene>
    <name evidence="1" type="primary">iscS</name>
    <name type="ordered locus">ASA_2612</name>
</gene>
<name>ISCS_AERS4</name>
<feature type="chain" id="PRO_1000019401" description="Cysteine desulfurase IscS">
    <location>
        <begin position="1"/>
        <end position="404"/>
    </location>
</feature>
<feature type="active site" description="Cysteine persulfide intermediate" evidence="1">
    <location>
        <position position="328"/>
    </location>
</feature>
<feature type="binding site" evidence="1">
    <location>
        <begin position="75"/>
        <end position="76"/>
    </location>
    <ligand>
        <name>pyridoxal 5'-phosphate</name>
        <dbReference type="ChEBI" id="CHEBI:597326"/>
    </ligand>
</feature>
<feature type="binding site" evidence="1">
    <location>
        <position position="155"/>
    </location>
    <ligand>
        <name>pyridoxal 5'-phosphate</name>
        <dbReference type="ChEBI" id="CHEBI:597326"/>
    </ligand>
</feature>
<feature type="binding site" evidence="1">
    <location>
        <position position="183"/>
    </location>
    <ligand>
        <name>pyridoxal 5'-phosphate</name>
        <dbReference type="ChEBI" id="CHEBI:597326"/>
    </ligand>
</feature>
<feature type="binding site" evidence="1">
    <location>
        <begin position="203"/>
        <end position="205"/>
    </location>
    <ligand>
        <name>pyridoxal 5'-phosphate</name>
        <dbReference type="ChEBI" id="CHEBI:597326"/>
    </ligand>
</feature>
<feature type="binding site" evidence="1">
    <location>
        <position position="243"/>
    </location>
    <ligand>
        <name>pyridoxal 5'-phosphate</name>
        <dbReference type="ChEBI" id="CHEBI:597326"/>
    </ligand>
</feature>
<feature type="binding site" description="via persulfide group" evidence="1">
    <location>
        <position position="328"/>
    </location>
    <ligand>
        <name>[2Fe-2S] cluster</name>
        <dbReference type="ChEBI" id="CHEBI:190135"/>
        <note>ligand shared with IscU</note>
    </ligand>
</feature>
<feature type="modified residue" description="N6-(pyridoxal phosphate)lysine" evidence="1">
    <location>
        <position position="206"/>
    </location>
</feature>
<accession>A4SP14</accession>
<protein>
    <recommendedName>
        <fullName evidence="1">Cysteine desulfurase IscS</fullName>
        <ecNumber evidence="1">2.8.1.7</ecNumber>
    </recommendedName>
</protein>
<proteinExistence type="inferred from homology"/>
<evidence type="ECO:0000255" key="1">
    <source>
        <dbReference type="HAMAP-Rule" id="MF_00331"/>
    </source>
</evidence>
<comment type="function">
    <text evidence="1">Master enzyme that delivers sulfur to a number of partners involved in Fe-S cluster assembly, tRNA modification or cofactor biosynthesis. Catalyzes the removal of elemental sulfur atoms from cysteine to produce alanine. Functions as a sulfur delivery protein for Fe-S cluster synthesis onto IscU, an Fe-S scaffold assembly protein, as well as other S acceptor proteins.</text>
</comment>
<comment type="catalytic activity">
    <reaction evidence="1">
        <text>(sulfur carrier)-H + L-cysteine = (sulfur carrier)-SH + L-alanine</text>
        <dbReference type="Rhea" id="RHEA:43892"/>
        <dbReference type="Rhea" id="RHEA-COMP:14737"/>
        <dbReference type="Rhea" id="RHEA-COMP:14739"/>
        <dbReference type="ChEBI" id="CHEBI:29917"/>
        <dbReference type="ChEBI" id="CHEBI:35235"/>
        <dbReference type="ChEBI" id="CHEBI:57972"/>
        <dbReference type="ChEBI" id="CHEBI:64428"/>
        <dbReference type="EC" id="2.8.1.7"/>
    </reaction>
</comment>
<comment type="cofactor">
    <cofactor evidence="1">
        <name>pyridoxal 5'-phosphate</name>
        <dbReference type="ChEBI" id="CHEBI:597326"/>
    </cofactor>
</comment>
<comment type="pathway">
    <text evidence="1">Cofactor biosynthesis; iron-sulfur cluster biosynthesis.</text>
</comment>
<comment type="subunit">
    <text evidence="1">Homodimer. Forms a heterotetramer with IscU, interacts with other sulfur acceptors.</text>
</comment>
<comment type="subcellular location">
    <subcellularLocation>
        <location evidence="1">Cytoplasm</location>
    </subcellularLocation>
</comment>
<comment type="similarity">
    <text evidence="1">Belongs to the class-V pyridoxal-phosphate-dependent aminotransferase family. NifS/IscS subfamily.</text>
</comment>